<reference key="1">
    <citation type="journal article" date="2001" name="Nature">
        <title>Complete genome sequence of Salmonella enterica serovar Typhimurium LT2.</title>
        <authorList>
            <person name="McClelland M."/>
            <person name="Sanderson K.E."/>
            <person name="Spieth J."/>
            <person name="Clifton S.W."/>
            <person name="Latreille P."/>
            <person name="Courtney L."/>
            <person name="Porwollik S."/>
            <person name="Ali J."/>
            <person name="Dante M."/>
            <person name="Du F."/>
            <person name="Hou S."/>
            <person name="Layman D."/>
            <person name="Leonard S."/>
            <person name="Nguyen C."/>
            <person name="Scott K."/>
            <person name="Holmes A."/>
            <person name="Grewal N."/>
            <person name="Mulvaney E."/>
            <person name="Ryan E."/>
            <person name="Sun H."/>
            <person name="Florea L."/>
            <person name="Miller W."/>
            <person name="Stoneking T."/>
            <person name="Nhan M."/>
            <person name="Waterston R."/>
            <person name="Wilson R.K."/>
        </authorList>
    </citation>
    <scope>NUCLEOTIDE SEQUENCE [LARGE SCALE GENOMIC DNA]</scope>
    <source>
        <strain>LT2 / SGSC1412 / ATCC 700720</strain>
    </source>
</reference>
<proteinExistence type="inferred from homology"/>
<evidence type="ECO:0000255" key="1">
    <source>
        <dbReference type="HAMAP-Rule" id="MF_00552"/>
    </source>
</evidence>
<sequence>MAHSHSHADSHLPKDNNARRLLFAFIVTAGFMLLEVVGGILSGSLALLADAGHMLTDAAALLFALLAVQFSRRPPTVRHTFGWLRLTTLAAFVNAIALVVITLLIVWEAIERFYTPRPVAGNLMMVIAVAGLLANLFAFWILHRGSDEKNLNVRAAALHVMGDLLGSVGAIVAALIIIWTGWTPADPILSILVSVLVLRSAWRLLKDSVNELLEGAPVSLDINALQRHLSREIPEVRNVHHVHVWMVGEKPVMTLHAQVIPPHDHDALLERIQDFLMHEYHIAHATIQMEYQVCHGPDCHLNQTSSGHVHHH</sequence>
<comment type="function">
    <text evidence="1">Involved in zinc efflux across the cytoplasmic membrane, thus reducing zinc accumulation in the cytoplasm and rendering bacteria more resistant to zinc. It may contribute to zinc homeostasis at low concentrations of zinc.</text>
</comment>
<comment type="subcellular location">
    <subcellularLocation>
        <location evidence="1">Cell inner membrane</location>
        <topology evidence="1">Multi-pass membrane protein</topology>
    </subcellularLocation>
</comment>
<comment type="similarity">
    <text evidence="1">Belongs to the cation diffusion facilitator (CDF) transporter (TC 2.A.4) family. SLC30A subfamily.</text>
</comment>
<keyword id="KW-0997">Cell inner membrane</keyword>
<keyword id="KW-1003">Cell membrane</keyword>
<keyword id="KW-0406">Ion transport</keyword>
<keyword id="KW-0472">Membrane</keyword>
<keyword id="KW-1185">Reference proteome</keyword>
<keyword id="KW-0812">Transmembrane</keyword>
<keyword id="KW-1133">Transmembrane helix</keyword>
<keyword id="KW-0813">Transport</keyword>
<keyword id="KW-0862">Zinc</keyword>
<keyword id="KW-0864">Zinc transport</keyword>
<gene>
    <name evidence="1" type="primary">zitB</name>
    <name type="ordered locus">STM0758</name>
</gene>
<organism>
    <name type="scientific">Salmonella typhimurium (strain LT2 / SGSC1412 / ATCC 700720)</name>
    <dbReference type="NCBI Taxonomy" id="99287"/>
    <lineage>
        <taxon>Bacteria</taxon>
        <taxon>Pseudomonadati</taxon>
        <taxon>Pseudomonadota</taxon>
        <taxon>Gammaproteobacteria</taxon>
        <taxon>Enterobacterales</taxon>
        <taxon>Enterobacteriaceae</taxon>
        <taxon>Salmonella</taxon>
    </lineage>
</organism>
<protein>
    <recommendedName>
        <fullName evidence="1">Zinc transporter ZitB</fullName>
    </recommendedName>
</protein>
<feature type="chain" id="PRO_0000206111" description="Zinc transporter ZitB">
    <location>
        <begin position="1"/>
        <end position="312"/>
    </location>
</feature>
<feature type="transmembrane region" description="Helical" evidence="1">
    <location>
        <begin position="21"/>
        <end position="41"/>
    </location>
</feature>
<feature type="transmembrane region" description="Helical" evidence="1">
    <location>
        <begin position="48"/>
        <end position="68"/>
    </location>
</feature>
<feature type="transmembrane region" description="Helical" evidence="1">
    <location>
        <begin position="90"/>
        <end position="110"/>
    </location>
</feature>
<feature type="transmembrane region" description="Helical" evidence="1">
    <location>
        <begin position="123"/>
        <end position="143"/>
    </location>
</feature>
<feature type="transmembrane region" description="Helical" evidence="1">
    <location>
        <begin position="164"/>
        <end position="184"/>
    </location>
</feature>
<accession>Q8ZQT3</accession>
<dbReference type="EMBL" id="AE006468">
    <property type="protein sequence ID" value="AAL19697.1"/>
    <property type="molecule type" value="Genomic_DNA"/>
</dbReference>
<dbReference type="RefSeq" id="WP_000951251.1">
    <property type="nucleotide sequence ID" value="NC_003197.2"/>
</dbReference>
<dbReference type="SMR" id="Q8ZQT3"/>
<dbReference type="STRING" id="99287.STM0758"/>
<dbReference type="PaxDb" id="99287-STM0758"/>
<dbReference type="KEGG" id="stm:STM0758"/>
<dbReference type="PATRIC" id="fig|99287.12.peg.789"/>
<dbReference type="HOGENOM" id="CLU_013430_0_0_6"/>
<dbReference type="OMA" id="GHEKMLH"/>
<dbReference type="PhylomeDB" id="Q8ZQT3"/>
<dbReference type="BioCyc" id="SENT99287:STM0758-MONOMER"/>
<dbReference type="Proteomes" id="UP000001014">
    <property type="component" value="Chromosome"/>
</dbReference>
<dbReference type="GO" id="GO:0005886">
    <property type="term" value="C:plasma membrane"/>
    <property type="evidence" value="ECO:0000318"/>
    <property type="project" value="GO_Central"/>
</dbReference>
<dbReference type="GO" id="GO:0005385">
    <property type="term" value="F:zinc ion transmembrane transporter activity"/>
    <property type="evidence" value="ECO:0000318"/>
    <property type="project" value="GO_Central"/>
</dbReference>
<dbReference type="GO" id="GO:0071577">
    <property type="term" value="P:zinc ion transmembrane transport"/>
    <property type="evidence" value="ECO:0000318"/>
    <property type="project" value="GO_Central"/>
</dbReference>
<dbReference type="FunFam" id="1.20.1510.10:FF:000016">
    <property type="entry name" value="Zinc transporter ZitB"/>
    <property type="match status" value="1"/>
</dbReference>
<dbReference type="Gene3D" id="1.20.1510.10">
    <property type="entry name" value="Cation efflux protein transmembrane domain"/>
    <property type="match status" value="1"/>
</dbReference>
<dbReference type="HAMAP" id="MF_00552">
    <property type="entry name" value="ZitB"/>
    <property type="match status" value="1"/>
</dbReference>
<dbReference type="InterPro" id="IPR002524">
    <property type="entry name" value="Cation_efflux"/>
</dbReference>
<dbReference type="InterPro" id="IPR036837">
    <property type="entry name" value="Cation_efflux_CTD_sf"/>
</dbReference>
<dbReference type="InterPro" id="IPR027469">
    <property type="entry name" value="Cation_efflux_TMD_sf"/>
</dbReference>
<dbReference type="InterPro" id="IPR050681">
    <property type="entry name" value="CDF/SLC30A"/>
</dbReference>
<dbReference type="InterPro" id="IPR023500">
    <property type="entry name" value="Zn_transptr_ZitB"/>
</dbReference>
<dbReference type="NCBIfam" id="TIGR01297">
    <property type="entry name" value="CDF"/>
    <property type="match status" value="1"/>
</dbReference>
<dbReference type="NCBIfam" id="NF002923">
    <property type="entry name" value="PRK03557.1"/>
    <property type="match status" value="1"/>
</dbReference>
<dbReference type="PANTHER" id="PTHR11562">
    <property type="entry name" value="CATION EFFLUX PROTEIN/ ZINC TRANSPORTER"/>
    <property type="match status" value="1"/>
</dbReference>
<dbReference type="PANTHER" id="PTHR11562:SF17">
    <property type="entry name" value="RE54080P-RELATED"/>
    <property type="match status" value="1"/>
</dbReference>
<dbReference type="Pfam" id="PF01545">
    <property type="entry name" value="Cation_efflux"/>
    <property type="match status" value="1"/>
</dbReference>
<dbReference type="SUPFAM" id="SSF160240">
    <property type="entry name" value="Cation efflux protein cytoplasmic domain-like"/>
    <property type="match status" value="1"/>
</dbReference>
<dbReference type="SUPFAM" id="SSF161111">
    <property type="entry name" value="Cation efflux protein transmembrane domain-like"/>
    <property type="match status" value="1"/>
</dbReference>
<name>ZITB_SALTY</name>